<name>RL28_MARSD</name>
<organism>
    <name type="scientific">Maridesulfovibrio salexigens (strain ATCC 14822 / DSM 2638 / NCIMB 8403 / VKM B-1763)</name>
    <name type="common">Desulfovibrio salexigens</name>
    <dbReference type="NCBI Taxonomy" id="526222"/>
    <lineage>
        <taxon>Bacteria</taxon>
        <taxon>Pseudomonadati</taxon>
        <taxon>Thermodesulfobacteriota</taxon>
        <taxon>Desulfovibrionia</taxon>
        <taxon>Desulfovibrionales</taxon>
        <taxon>Desulfovibrionaceae</taxon>
        <taxon>Maridesulfovibrio</taxon>
    </lineage>
</organism>
<proteinExistence type="inferred from homology"/>
<accession>C6BYE0</accession>
<evidence type="ECO:0000255" key="1">
    <source>
        <dbReference type="HAMAP-Rule" id="MF_00373"/>
    </source>
</evidence>
<evidence type="ECO:0000305" key="2"/>
<gene>
    <name evidence="1" type="primary">rpmB</name>
    <name type="ordered locus">Desal_0665</name>
</gene>
<sequence length="70" mass="7577">MSQVCDICGKGPQTGNNVSHAHNKTKRRFMPNLQKVRTQLPSGEVKSIKACTRCIRSGAVVKPVAKKAVS</sequence>
<dbReference type="EMBL" id="CP001649">
    <property type="protein sequence ID" value="ACS78731.1"/>
    <property type="molecule type" value="Genomic_DNA"/>
</dbReference>
<dbReference type="RefSeq" id="WP_015850550.1">
    <property type="nucleotide sequence ID" value="NC_012881.1"/>
</dbReference>
<dbReference type="SMR" id="C6BYE0"/>
<dbReference type="STRING" id="526222.Desal_0665"/>
<dbReference type="KEGG" id="dsa:Desal_0665"/>
<dbReference type="eggNOG" id="COG0227">
    <property type="taxonomic scope" value="Bacteria"/>
</dbReference>
<dbReference type="HOGENOM" id="CLU_064548_7_0_7"/>
<dbReference type="OrthoDB" id="9805609at2"/>
<dbReference type="Proteomes" id="UP000002601">
    <property type="component" value="Chromosome"/>
</dbReference>
<dbReference type="GO" id="GO:1990904">
    <property type="term" value="C:ribonucleoprotein complex"/>
    <property type="evidence" value="ECO:0007669"/>
    <property type="project" value="UniProtKB-KW"/>
</dbReference>
<dbReference type="GO" id="GO:0005840">
    <property type="term" value="C:ribosome"/>
    <property type="evidence" value="ECO:0007669"/>
    <property type="project" value="UniProtKB-KW"/>
</dbReference>
<dbReference type="GO" id="GO:0003735">
    <property type="term" value="F:structural constituent of ribosome"/>
    <property type="evidence" value="ECO:0007669"/>
    <property type="project" value="InterPro"/>
</dbReference>
<dbReference type="GO" id="GO:0006412">
    <property type="term" value="P:translation"/>
    <property type="evidence" value="ECO:0007669"/>
    <property type="project" value="UniProtKB-UniRule"/>
</dbReference>
<dbReference type="Gene3D" id="2.30.170.40">
    <property type="entry name" value="Ribosomal protein L28/L24"/>
    <property type="match status" value="1"/>
</dbReference>
<dbReference type="HAMAP" id="MF_00373">
    <property type="entry name" value="Ribosomal_bL28"/>
    <property type="match status" value="1"/>
</dbReference>
<dbReference type="InterPro" id="IPR050096">
    <property type="entry name" value="Bacterial_rp_bL28"/>
</dbReference>
<dbReference type="InterPro" id="IPR026569">
    <property type="entry name" value="Ribosomal_bL28"/>
</dbReference>
<dbReference type="InterPro" id="IPR034704">
    <property type="entry name" value="Ribosomal_bL28/bL31-like_sf"/>
</dbReference>
<dbReference type="InterPro" id="IPR001383">
    <property type="entry name" value="Ribosomal_bL28_bact-type"/>
</dbReference>
<dbReference type="InterPro" id="IPR037147">
    <property type="entry name" value="Ribosomal_bL28_sf"/>
</dbReference>
<dbReference type="NCBIfam" id="TIGR00009">
    <property type="entry name" value="L28"/>
    <property type="match status" value="1"/>
</dbReference>
<dbReference type="PANTHER" id="PTHR39080">
    <property type="entry name" value="50S RIBOSOMAL PROTEIN L28"/>
    <property type="match status" value="1"/>
</dbReference>
<dbReference type="PANTHER" id="PTHR39080:SF1">
    <property type="entry name" value="LARGE RIBOSOMAL SUBUNIT PROTEIN BL28A"/>
    <property type="match status" value="1"/>
</dbReference>
<dbReference type="Pfam" id="PF00830">
    <property type="entry name" value="Ribosomal_L28"/>
    <property type="match status" value="1"/>
</dbReference>
<dbReference type="SUPFAM" id="SSF143800">
    <property type="entry name" value="L28p-like"/>
    <property type="match status" value="1"/>
</dbReference>
<comment type="similarity">
    <text evidence="1">Belongs to the bacterial ribosomal protein bL28 family.</text>
</comment>
<keyword id="KW-1185">Reference proteome</keyword>
<keyword id="KW-0687">Ribonucleoprotein</keyword>
<keyword id="KW-0689">Ribosomal protein</keyword>
<feature type="chain" id="PRO_1000205593" description="Large ribosomal subunit protein bL28">
    <location>
        <begin position="1"/>
        <end position="70"/>
    </location>
</feature>
<protein>
    <recommendedName>
        <fullName evidence="1">Large ribosomal subunit protein bL28</fullName>
    </recommendedName>
    <alternativeName>
        <fullName evidence="2">50S ribosomal protein L28</fullName>
    </alternativeName>
</protein>
<reference key="1">
    <citation type="submission" date="2009-06" db="EMBL/GenBank/DDBJ databases">
        <title>Complete sequence of Desulfovibrio salexigens DSM 2638.</title>
        <authorList>
            <consortium name="US DOE Joint Genome Institute"/>
            <person name="Lucas S."/>
            <person name="Copeland A."/>
            <person name="Lapidus A."/>
            <person name="Glavina del Rio T."/>
            <person name="Tice H."/>
            <person name="Bruce D."/>
            <person name="Goodwin L."/>
            <person name="Pitluck S."/>
            <person name="Munk A.C."/>
            <person name="Brettin T."/>
            <person name="Detter J.C."/>
            <person name="Han C."/>
            <person name="Tapia R."/>
            <person name="Larimer F."/>
            <person name="Land M."/>
            <person name="Hauser L."/>
            <person name="Kyrpides N."/>
            <person name="Anderson I."/>
            <person name="Wall J.D."/>
            <person name="Arkin A.P."/>
            <person name="Dehal P."/>
            <person name="Chivian D."/>
            <person name="Giles B."/>
            <person name="Hazen T.C."/>
        </authorList>
    </citation>
    <scope>NUCLEOTIDE SEQUENCE [LARGE SCALE GENOMIC DNA]</scope>
    <source>
        <strain>ATCC 14822 / DSM 2638 / NCIMB 8403 / VKM B-1763</strain>
    </source>
</reference>